<proteinExistence type="inferred from homology"/>
<reference key="1">
    <citation type="journal article" date="2007" name="PLoS Genet.">
        <title>A tale of two oxidation states: bacterial colonization of arsenic-rich environments.</title>
        <authorList>
            <person name="Muller D."/>
            <person name="Medigue C."/>
            <person name="Koechler S."/>
            <person name="Barbe V."/>
            <person name="Barakat M."/>
            <person name="Talla E."/>
            <person name="Bonnefoy V."/>
            <person name="Krin E."/>
            <person name="Arsene-Ploetze F."/>
            <person name="Carapito C."/>
            <person name="Chandler M."/>
            <person name="Cournoyer B."/>
            <person name="Cruveiller S."/>
            <person name="Dossat C."/>
            <person name="Duval S."/>
            <person name="Heymann M."/>
            <person name="Leize E."/>
            <person name="Lieutaud A."/>
            <person name="Lievremont D."/>
            <person name="Makita Y."/>
            <person name="Mangenot S."/>
            <person name="Nitschke W."/>
            <person name="Ortet P."/>
            <person name="Perdrial N."/>
            <person name="Schoepp B."/>
            <person name="Siguier P."/>
            <person name="Simeonova D.D."/>
            <person name="Rouy Z."/>
            <person name="Segurens B."/>
            <person name="Turlin E."/>
            <person name="Vallenet D."/>
            <person name="van Dorsselaer A."/>
            <person name="Weiss S."/>
            <person name="Weissenbach J."/>
            <person name="Lett M.-C."/>
            <person name="Danchin A."/>
            <person name="Bertin P.N."/>
        </authorList>
    </citation>
    <scope>NUCLEOTIDE SEQUENCE [LARGE SCALE GENOMIC DNA]</scope>
    <source>
        <strain>ULPAs1</strain>
    </source>
</reference>
<accession>A4G1Q7</accession>
<evidence type="ECO:0000255" key="1">
    <source>
        <dbReference type="HAMAP-Rule" id="MF_00186"/>
    </source>
</evidence>
<keyword id="KW-0067">ATP-binding</keyword>
<keyword id="KW-0319">Glycerol metabolism</keyword>
<keyword id="KW-0418">Kinase</keyword>
<keyword id="KW-0547">Nucleotide-binding</keyword>
<keyword id="KW-1185">Reference proteome</keyword>
<keyword id="KW-0808">Transferase</keyword>
<gene>
    <name evidence="1" type="primary">glpK</name>
    <name type="ordered locus">HEAR0215</name>
</gene>
<organism>
    <name type="scientific">Herminiimonas arsenicoxydans</name>
    <dbReference type="NCBI Taxonomy" id="204773"/>
    <lineage>
        <taxon>Bacteria</taxon>
        <taxon>Pseudomonadati</taxon>
        <taxon>Pseudomonadota</taxon>
        <taxon>Betaproteobacteria</taxon>
        <taxon>Burkholderiales</taxon>
        <taxon>Oxalobacteraceae</taxon>
        <taxon>Herminiimonas</taxon>
    </lineage>
</organism>
<name>GLPK_HERAR</name>
<protein>
    <recommendedName>
        <fullName evidence="1">Glycerol kinase</fullName>
        <ecNumber evidence="1">2.7.1.30</ecNumber>
    </recommendedName>
    <alternativeName>
        <fullName evidence="1">ATP:glycerol 3-phosphotransferase</fullName>
    </alternativeName>
    <alternativeName>
        <fullName evidence="1">Glycerokinase</fullName>
        <shortName evidence="1">GK</shortName>
    </alternativeName>
</protein>
<dbReference type="EC" id="2.7.1.30" evidence="1"/>
<dbReference type="EMBL" id="CU207211">
    <property type="protein sequence ID" value="CAL60444.1"/>
    <property type="molecule type" value="Genomic_DNA"/>
</dbReference>
<dbReference type="SMR" id="A4G1Q7"/>
<dbReference type="STRING" id="204773.HEAR0215"/>
<dbReference type="KEGG" id="har:HEAR0215"/>
<dbReference type="eggNOG" id="COG0554">
    <property type="taxonomic scope" value="Bacteria"/>
</dbReference>
<dbReference type="HOGENOM" id="CLU_009281_2_3_4"/>
<dbReference type="OrthoDB" id="9805576at2"/>
<dbReference type="UniPathway" id="UPA00618">
    <property type="reaction ID" value="UER00672"/>
</dbReference>
<dbReference type="Proteomes" id="UP000006697">
    <property type="component" value="Chromosome"/>
</dbReference>
<dbReference type="GO" id="GO:0005829">
    <property type="term" value="C:cytosol"/>
    <property type="evidence" value="ECO:0007669"/>
    <property type="project" value="TreeGrafter"/>
</dbReference>
<dbReference type="GO" id="GO:0005524">
    <property type="term" value="F:ATP binding"/>
    <property type="evidence" value="ECO:0007669"/>
    <property type="project" value="UniProtKB-UniRule"/>
</dbReference>
<dbReference type="GO" id="GO:0004370">
    <property type="term" value="F:glycerol kinase activity"/>
    <property type="evidence" value="ECO:0000250"/>
    <property type="project" value="UniProtKB"/>
</dbReference>
<dbReference type="GO" id="GO:0019563">
    <property type="term" value="P:glycerol catabolic process"/>
    <property type="evidence" value="ECO:0007669"/>
    <property type="project" value="UniProtKB-UniRule"/>
</dbReference>
<dbReference type="GO" id="GO:0006071">
    <property type="term" value="P:glycerol metabolic process"/>
    <property type="evidence" value="ECO:0000250"/>
    <property type="project" value="UniProtKB"/>
</dbReference>
<dbReference type="GO" id="GO:0006072">
    <property type="term" value="P:glycerol-3-phosphate metabolic process"/>
    <property type="evidence" value="ECO:0007669"/>
    <property type="project" value="InterPro"/>
</dbReference>
<dbReference type="CDD" id="cd07786">
    <property type="entry name" value="FGGY_EcGK_like"/>
    <property type="match status" value="1"/>
</dbReference>
<dbReference type="FunFam" id="3.30.420.40:FF:000007">
    <property type="entry name" value="Glycerol kinase"/>
    <property type="match status" value="1"/>
</dbReference>
<dbReference type="FunFam" id="3.30.420.40:FF:000008">
    <property type="entry name" value="Glycerol kinase"/>
    <property type="match status" value="1"/>
</dbReference>
<dbReference type="Gene3D" id="3.30.420.40">
    <property type="match status" value="2"/>
</dbReference>
<dbReference type="HAMAP" id="MF_00186">
    <property type="entry name" value="Glycerol_kin"/>
    <property type="match status" value="1"/>
</dbReference>
<dbReference type="InterPro" id="IPR043129">
    <property type="entry name" value="ATPase_NBD"/>
</dbReference>
<dbReference type="InterPro" id="IPR000577">
    <property type="entry name" value="Carb_kinase_FGGY"/>
</dbReference>
<dbReference type="InterPro" id="IPR018483">
    <property type="entry name" value="Carb_kinase_FGGY_CS"/>
</dbReference>
<dbReference type="InterPro" id="IPR018485">
    <property type="entry name" value="FGGY_C"/>
</dbReference>
<dbReference type="InterPro" id="IPR018484">
    <property type="entry name" value="FGGY_N"/>
</dbReference>
<dbReference type="InterPro" id="IPR005999">
    <property type="entry name" value="Glycerol_kin"/>
</dbReference>
<dbReference type="NCBIfam" id="TIGR01311">
    <property type="entry name" value="glycerol_kin"/>
    <property type="match status" value="1"/>
</dbReference>
<dbReference type="NCBIfam" id="NF000756">
    <property type="entry name" value="PRK00047.1"/>
    <property type="match status" value="1"/>
</dbReference>
<dbReference type="PANTHER" id="PTHR10196:SF69">
    <property type="entry name" value="GLYCEROL KINASE"/>
    <property type="match status" value="1"/>
</dbReference>
<dbReference type="PANTHER" id="PTHR10196">
    <property type="entry name" value="SUGAR KINASE"/>
    <property type="match status" value="1"/>
</dbReference>
<dbReference type="Pfam" id="PF02782">
    <property type="entry name" value="FGGY_C"/>
    <property type="match status" value="1"/>
</dbReference>
<dbReference type="Pfam" id="PF00370">
    <property type="entry name" value="FGGY_N"/>
    <property type="match status" value="1"/>
</dbReference>
<dbReference type="PIRSF" id="PIRSF000538">
    <property type="entry name" value="GlpK"/>
    <property type="match status" value="1"/>
</dbReference>
<dbReference type="SUPFAM" id="SSF53067">
    <property type="entry name" value="Actin-like ATPase domain"/>
    <property type="match status" value="2"/>
</dbReference>
<dbReference type="PROSITE" id="PS00933">
    <property type="entry name" value="FGGY_KINASES_1"/>
    <property type="match status" value="1"/>
</dbReference>
<dbReference type="PROSITE" id="PS00445">
    <property type="entry name" value="FGGY_KINASES_2"/>
    <property type="match status" value="1"/>
</dbReference>
<sequence>MKKYILAIDQGTTSSRAILFNHAGQIHGMTQQEYPQIFPAPGWVEHDANAIWHSQLAVAQQVLKEQHLSAADIAAIGITNQRETTVLWDRQTGEPIAHAIVWQDRRTAALCDQLRADGKAPLFQQKTGLVLDSYFSGTKLKWLLDHTPGARVRAERGELAFGTIDSWLIFKLSGNHVTDTSNASRTLLFNIHTKQWDDELLALLDIPHSLLPAIVPSSGIVGQTYTSLFGQSIPIAGIAGDQQAATFGQACHRPGMAKNTYGTGCFMLLNTGTQAIASHNNLLTTIGWTLGNDVDARTDYMLEGSVFMAGAIIQWLRDGLGIIQHSSDVEALATSVPDNGGVVFIPAFSGLGAPYWDPYARGTIVGMTRGSNKAHIARAALESIAYQTVDVLEAMQKDAQILLQELRVDGGAARNDLLMQFQADMLNVPVIRPVVTETTALGAAYLAGLAVAFWESKEEIATQWQMERRFEPRMTDDEHAQRLYTWHRAVQRAQAWNI</sequence>
<comment type="function">
    <text evidence="1">Key enzyme in the regulation of glycerol uptake and metabolism. Catalyzes the phosphorylation of glycerol to yield sn-glycerol 3-phosphate.</text>
</comment>
<comment type="catalytic activity">
    <reaction evidence="1">
        <text>glycerol + ATP = sn-glycerol 3-phosphate + ADP + H(+)</text>
        <dbReference type="Rhea" id="RHEA:21644"/>
        <dbReference type="ChEBI" id="CHEBI:15378"/>
        <dbReference type="ChEBI" id="CHEBI:17754"/>
        <dbReference type="ChEBI" id="CHEBI:30616"/>
        <dbReference type="ChEBI" id="CHEBI:57597"/>
        <dbReference type="ChEBI" id="CHEBI:456216"/>
        <dbReference type="EC" id="2.7.1.30"/>
    </reaction>
</comment>
<comment type="activity regulation">
    <text evidence="1">Inhibited by fructose 1,6-bisphosphate (FBP).</text>
</comment>
<comment type="pathway">
    <text evidence="1">Polyol metabolism; glycerol degradation via glycerol kinase pathway; sn-glycerol 3-phosphate from glycerol: step 1/1.</text>
</comment>
<comment type="similarity">
    <text evidence="1">Belongs to the FGGY kinase family.</text>
</comment>
<feature type="chain" id="PRO_1000077419" description="Glycerol kinase">
    <location>
        <begin position="1"/>
        <end position="498"/>
    </location>
</feature>
<feature type="binding site" evidence="1">
    <location>
        <position position="12"/>
    </location>
    <ligand>
        <name>ADP</name>
        <dbReference type="ChEBI" id="CHEBI:456216"/>
    </ligand>
</feature>
<feature type="binding site" evidence="1">
    <location>
        <position position="12"/>
    </location>
    <ligand>
        <name>ATP</name>
        <dbReference type="ChEBI" id="CHEBI:30616"/>
    </ligand>
</feature>
<feature type="binding site" evidence="1">
    <location>
        <position position="12"/>
    </location>
    <ligand>
        <name>sn-glycerol 3-phosphate</name>
        <dbReference type="ChEBI" id="CHEBI:57597"/>
    </ligand>
</feature>
<feature type="binding site" evidence="1">
    <location>
        <position position="13"/>
    </location>
    <ligand>
        <name>ATP</name>
        <dbReference type="ChEBI" id="CHEBI:30616"/>
    </ligand>
</feature>
<feature type="binding site" evidence="1">
    <location>
        <position position="14"/>
    </location>
    <ligand>
        <name>ATP</name>
        <dbReference type="ChEBI" id="CHEBI:30616"/>
    </ligand>
</feature>
<feature type="binding site" evidence="1">
    <location>
        <position position="16"/>
    </location>
    <ligand>
        <name>ADP</name>
        <dbReference type="ChEBI" id="CHEBI:456216"/>
    </ligand>
</feature>
<feature type="binding site" evidence="1">
    <location>
        <position position="82"/>
    </location>
    <ligand>
        <name>glycerol</name>
        <dbReference type="ChEBI" id="CHEBI:17754"/>
    </ligand>
</feature>
<feature type="binding site" evidence="1">
    <location>
        <position position="82"/>
    </location>
    <ligand>
        <name>sn-glycerol 3-phosphate</name>
        <dbReference type="ChEBI" id="CHEBI:57597"/>
    </ligand>
</feature>
<feature type="binding site" evidence="1">
    <location>
        <position position="83"/>
    </location>
    <ligand>
        <name>glycerol</name>
        <dbReference type="ChEBI" id="CHEBI:17754"/>
    </ligand>
</feature>
<feature type="binding site" evidence="1">
    <location>
        <position position="83"/>
    </location>
    <ligand>
        <name>sn-glycerol 3-phosphate</name>
        <dbReference type="ChEBI" id="CHEBI:57597"/>
    </ligand>
</feature>
<feature type="binding site" evidence="1">
    <location>
        <position position="134"/>
    </location>
    <ligand>
        <name>glycerol</name>
        <dbReference type="ChEBI" id="CHEBI:17754"/>
    </ligand>
</feature>
<feature type="binding site" evidence="1">
    <location>
        <position position="134"/>
    </location>
    <ligand>
        <name>sn-glycerol 3-phosphate</name>
        <dbReference type="ChEBI" id="CHEBI:57597"/>
    </ligand>
</feature>
<feature type="binding site" evidence="1">
    <location>
        <position position="241"/>
    </location>
    <ligand>
        <name>glycerol</name>
        <dbReference type="ChEBI" id="CHEBI:17754"/>
    </ligand>
</feature>
<feature type="binding site" evidence="1">
    <location>
        <position position="241"/>
    </location>
    <ligand>
        <name>sn-glycerol 3-phosphate</name>
        <dbReference type="ChEBI" id="CHEBI:57597"/>
    </ligand>
</feature>
<feature type="binding site" evidence="1">
    <location>
        <position position="242"/>
    </location>
    <ligand>
        <name>glycerol</name>
        <dbReference type="ChEBI" id="CHEBI:17754"/>
    </ligand>
</feature>
<feature type="binding site" evidence="1">
    <location>
        <position position="263"/>
    </location>
    <ligand>
        <name>ADP</name>
        <dbReference type="ChEBI" id="CHEBI:456216"/>
    </ligand>
</feature>
<feature type="binding site" evidence="1">
    <location>
        <position position="263"/>
    </location>
    <ligand>
        <name>ATP</name>
        <dbReference type="ChEBI" id="CHEBI:30616"/>
    </ligand>
</feature>
<feature type="binding site" evidence="1">
    <location>
        <position position="310"/>
    </location>
    <ligand>
        <name>ADP</name>
        <dbReference type="ChEBI" id="CHEBI:456216"/>
    </ligand>
</feature>
<feature type="binding site" evidence="1">
    <location>
        <position position="310"/>
    </location>
    <ligand>
        <name>ATP</name>
        <dbReference type="ChEBI" id="CHEBI:30616"/>
    </ligand>
</feature>
<feature type="binding site" evidence="1">
    <location>
        <position position="314"/>
    </location>
    <ligand>
        <name>ATP</name>
        <dbReference type="ChEBI" id="CHEBI:30616"/>
    </ligand>
</feature>
<feature type="binding site" evidence="1">
    <location>
        <position position="411"/>
    </location>
    <ligand>
        <name>ADP</name>
        <dbReference type="ChEBI" id="CHEBI:456216"/>
    </ligand>
</feature>
<feature type="binding site" evidence="1">
    <location>
        <position position="411"/>
    </location>
    <ligand>
        <name>ATP</name>
        <dbReference type="ChEBI" id="CHEBI:30616"/>
    </ligand>
</feature>
<feature type="binding site" evidence="1">
    <location>
        <position position="415"/>
    </location>
    <ligand>
        <name>ADP</name>
        <dbReference type="ChEBI" id="CHEBI:456216"/>
    </ligand>
</feature>